<sequence>MVVAVYPGTFDPLTRGHEDLVRRASSIFDTLVVGVADSRNKRPFFNLEERLEIANEVLGHYPNVQVMSFKGLLKDFVRVNNARVIVRGLRAVSDFEYEFQMAGMNRYLLPDVETMFMTPSDQYQFISGTIVREIAQLGGDVSKFVFPSVEKRLQDKVAALEQARAANP</sequence>
<dbReference type="EC" id="2.7.7.3" evidence="1"/>
<dbReference type="EMBL" id="CP001043">
    <property type="protein sequence ID" value="ACC69503.1"/>
    <property type="molecule type" value="Genomic_DNA"/>
</dbReference>
<dbReference type="RefSeq" id="WP_012399730.1">
    <property type="nucleotide sequence ID" value="NC_010622.1"/>
</dbReference>
<dbReference type="SMR" id="B2JCN4"/>
<dbReference type="STRING" id="391038.Bphy_0310"/>
<dbReference type="KEGG" id="bph:Bphy_0310"/>
<dbReference type="eggNOG" id="COG0669">
    <property type="taxonomic scope" value="Bacteria"/>
</dbReference>
<dbReference type="HOGENOM" id="CLU_100149_0_1_4"/>
<dbReference type="OrthoDB" id="9806661at2"/>
<dbReference type="UniPathway" id="UPA00241">
    <property type="reaction ID" value="UER00355"/>
</dbReference>
<dbReference type="Proteomes" id="UP000001192">
    <property type="component" value="Chromosome 1"/>
</dbReference>
<dbReference type="GO" id="GO:0005737">
    <property type="term" value="C:cytoplasm"/>
    <property type="evidence" value="ECO:0007669"/>
    <property type="project" value="UniProtKB-SubCell"/>
</dbReference>
<dbReference type="GO" id="GO:0005524">
    <property type="term" value="F:ATP binding"/>
    <property type="evidence" value="ECO:0007669"/>
    <property type="project" value="UniProtKB-KW"/>
</dbReference>
<dbReference type="GO" id="GO:0004595">
    <property type="term" value="F:pantetheine-phosphate adenylyltransferase activity"/>
    <property type="evidence" value="ECO:0007669"/>
    <property type="project" value="UniProtKB-UniRule"/>
</dbReference>
<dbReference type="GO" id="GO:0015937">
    <property type="term" value="P:coenzyme A biosynthetic process"/>
    <property type="evidence" value="ECO:0007669"/>
    <property type="project" value="UniProtKB-UniRule"/>
</dbReference>
<dbReference type="CDD" id="cd02163">
    <property type="entry name" value="PPAT"/>
    <property type="match status" value="1"/>
</dbReference>
<dbReference type="Gene3D" id="3.40.50.620">
    <property type="entry name" value="HUPs"/>
    <property type="match status" value="1"/>
</dbReference>
<dbReference type="HAMAP" id="MF_00151">
    <property type="entry name" value="PPAT_bact"/>
    <property type="match status" value="1"/>
</dbReference>
<dbReference type="InterPro" id="IPR004821">
    <property type="entry name" value="Cyt_trans-like"/>
</dbReference>
<dbReference type="InterPro" id="IPR001980">
    <property type="entry name" value="PPAT"/>
</dbReference>
<dbReference type="InterPro" id="IPR014729">
    <property type="entry name" value="Rossmann-like_a/b/a_fold"/>
</dbReference>
<dbReference type="NCBIfam" id="TIGR01510">
    <property type="entry name" value="coaD_prev_kdtB"/>
    <property type="match status" value="1"/>
</dbReference>
<dbReference type="NCBIfam" id="TIGR00125">
    <property type="entry name" value="cyt_tran_rel"/>
    <property type="match status" value="1"/>
</dbReference>
<dbReference type="PANTHER" id="PTHR21342">
    <property type="entry name" value="PHOSPHOPANTETHEINE ADENYLYLTRANSFERASE"/>
    <property type="match status" value="1"/>
</dbReference>
<dbReference type="PANTHER" id="PTHR21342:SF1">
    <property type="entry name" value="PHOSPHOPANTETHEINE ADENYLYLTRANSFERASE"/>
    <property type="match status" value="1"/>
</dbReference>
<dbReference type="Pfam" id="PF01467">
    <property type="entry name" value="CTP_transf_like"/>
    <property type="match status" value="1"/>
</dbReference>
<dbReference type="PRINTS" id="PR01020">
    <property type="entry name" value="LPSBIOSNTHSS"/>
</dbReference>
<dbReference type="SUPFAM" id="SSF52374">
    <property type="entry name" value="Nucleotidylyl transferase"/>
    <property type="match status" value="1"/>
</dbReference>
<feature type="chain" id="PRO_1000096774" description="Phosphopantetheine adenylyltransferase">
    <location>
        <begin position="1"/>
        <end position="168"/>
    </location>
</feature>
<feature type="binding site" evidence="1">
    <location>
        <begin position="9"/>
        <end position="10"/>
    </location>
    <ligand>
        <name>ATP</name>
        <dbReference type="ChEBI" id="CHEBI:30616"/>
    </ligand>
</feature>
<feature type="binding site" evidence="1">
    <location>
        <position position="9"/>
    </location>
    <ligand>
        <name>substrate</name>
    </ligand>
</feature>
<feature type="binding site" evidence="1">
    <location>
        <position position="17"/>
    </location>
    <ligand>
        <name>ATP</name>
        <dbReference type="ChEBI" id="CHEBI:30616"/>
    </ligand>
</feature>
<feature type="binding site" evidence="1">
    <location>
        <position position="41"/>
    </location>
    <ligand>
        <name>substrate</name>
    </ligand>
</feature>
<feature type="binding site" evidence="1">
    <location>
        <position position="73"/>
    </location>
    <ligand>
        <name>substrate</name>
    </ligand>
</feature>
<feature type="binding site" evidence="1">
    <location>
        <position position="87"/>
    </location>
    <ligand>
        <name>substrate</name>
    </ligand>
</feature>
<feature type="binding site" evidence="1">
    <location>
        <begin position="88"/>
        <end position="90"/>
    </location>
    <ligand>
        <name>ATP</name>
        <dbReference type="ChEBI" id="CHEBI:30616"/>
    </ligand>
</feature>
<feature type="binding site" evidence="1">
    <location>
        <position position="98"/>
    </location>
    <ligand>
        <name>ATP</name>
        <dbReference type="ChEBI" id="CHEBI:30616"/>
    </ligand>
</feature>
<feature type="binding site" evidence="1">
    <location>
        <begin position="123"/>
        <end position="129"/>
    </location>
    <ligand>
        <name>ATP</name>
        <dbReference type="ChEBI" id="CHEBI:30616"/>
    </ligand>
</feature>
<feature type="site" description="Transition state stabilizer" evidence="1">
    <location>
        <position position="17"/>
    </location>
</feature>
<proteinExistence type="inferred from homology"/>
<organism>
    <name type="scientific">Paraburkholderia phymatum (strain DSM 17167 / CIP 108236 / LMG 21445 / STM815)</name>
    <name type="common">Burkholderia phymatum</name>
    <dbReference type="NCBI Taxonomy" id="391038"/>
    <lineage>
        <taxon>Bacteria</taxon>
        <taxon>Pseudomonadati</taxon>
        <taxon>Pseudomonadota</taxon>
        <taxon>Betaproteobacteria</taxon>
        <taxon>Burkholderiales</taxon>
        <taxon>Burkholderiaceae</taxon>
        <taxon>Paraburkholderia</taxon>
    </lineage>
</organism>
<comment type="function">
    <text evidence="1">Reversibly transfers an adenylyl group from ATP to 4'-phosphopantetheine, yielding dephospho-CoA (dPCoA) and pyrophosphate.</text>
</comment>
<comment type="catalytic activity">
    <reaction evidence="1">
        <text>(R)-4'-phosphopantetheine + ATP + H(+) = 3'-dephospho-CoA + diphosphate</text>
        <dbReference type="Rhea" id="RHEA:19801"/>
        <dbReference type="ChEBI" id="CHEBI:15378"/>
        <dbReference type="ChEBI" id="CHEBI:30616"/>
        <dbReference type="ChEBI" id="CHEBI:33019"/>
        <dbReference type="ChEBI" id="CHEBI:57328"/>
        <dbReference type="ChEBI" id="CHEBI:61723"/>
        <dbReference type="EC" id="2.7.7.3"/>
    </reaction>
</comment>
<comment type="cofactor">
    <cofactor evidence="1">
        <name>Mg(2+)</name>
        <dbReference type="ChEBI" id="CHEBI:18420"/>
    </cofactor>
</comment>
<comment type="pathway">
    <text evidence="1">Cofactor biosynthesis; coenzyme A biosynthesis; CoA from (R)-pantothenate: step 4/5.</text>
</comment>
<comment type="subunit">
    <text evidence="1">Homohexamer.</text>
</comment>
<comment type="subcellular location">
    <subcellularLocation>
        <location evidence="1">Cytoplasm</location>
    </subcellularLocation>
</comment>
<comment type="similarity">
    <text evidence="1">Belongs to the bacterial CoaD family.</text>
</comment>
<reference key="1">
    <citation type="journal article" date="2014" name="Stand. Genomic Sci.">
        <title>Complete genome sequence of Burkholderia phymatum STM815(T), a broad host range and efficient nitrogen-fixing symbiont of Mimosa species.</title>
        <authorList>
            <person name="Moulin L."/>
            <person name="Klonowska A."/>
            <person name="Caroline B."/>
            <person name="Booth K."/>
            <person name="Vriezen J.A."/>
            <person name="Melkonian R."/>
            <person name="James E.K."/>
            <person name="Young J.P."/>
            <person name="Bena G."/>
            <person name="Hauser L."/>
            <person name="Land M."/>
            <person name="Kyrpides N."/>
            <person name="Bruce D."/>
            <person name="Chain P."/>
            <person name="Copeland A."/>
            <person name="Pitluck S."/>
            <person name="Woyke T."/>
            <person name="Lizotte-Waniewski M."/>
            <person name="Bristow J."/>
            <person name="Riley M."/>
        </authorList>
    </citation>
    <scope>NUCLEOTIDE SEQUENCE [LARGE SCALE GENOMIC DNA]</scope>
    <source>
        <strain>DSM 17167 / CIP 108236 / LMG 21445 / STM815</strain>
    </source>
</reference>
<evidence type="ECO:0000255" key="1">
    <source>
        <dbReference type="HAMAP-Rule" id="MF_00151"/>
    </source>
</evidence>
<protein>
    <recommendedName>
        <fullName evidence="1">Phosphopantetheine adenylyltransferase</fullName>
        <ecNumber evidence="1">2.7.7.3</ecNumber>
    </recommendedName>
    <alternativeName>
        <fullName evidence="1">Dephospho-CoA pyrophosphorylase</fullName>
    </alternativeName>
    <alternativeName>
        <fullName evidence="1">Pantetheine-phosphate adenylyltransferase</fullName>
        <shortName evidence="1">PPAT</shortName>
    </alternativeName>
</protein>
<gene>
    <name evidence="1" type="primary">coaD</name>
    <name type="ordered locus">Bphy_0310</name>
</gene>
<accession>B2JCN4</accession>
<keyword id="KW-0067">ATP-binding</keyword>
<keyword id="KW-0173">Coenzyme A biosynthesis</keyword>
<keyword id="KW-0963">Cytoplasm</keyword>
<keyword id="KW-0460">Magnesium</keyword>
<keyword id="KW-0547">Nucleotide-binding</keyword>
<keyword id="KW-0548">Nucleotidyltransferase</keyword>
<keyword id="KW-1185">Reference proteome</keyword>
<keyword id="KW-0808">Transferase</keyword>
<name>COAD_PARP8</name>